<protein>
    <recommendedName>
        <fullName>pyr operon leader peptide</fullName>
    </recommendedName>
    <alternativeName>
        <fullName>pyrBI operon attenuator</fullName>
    </alternativeName>
</protein>
<reference key="1">
    <citation type="journal article" date="1985" name="J. Bacteriol.">
        <title>Role of translation and attenuation in the control of pyrBI operon expression in Escherichia coli K-12.</title>
        <authorList>
            <person name="Roland K.L."/>
            <person name="Powell F.E."/>
            <person name="Turnbough C.L. Jr."/>
        </authorList>
    </citation>
    <scope>NUCLEOTIDE SEQUENCE [GENOMIC DNA]</scope>
    <source>
        <strain>K12</strain>
    </source>
</reference>
<reference key="2">
    <citation type="journal article" date="1983" name="Proc. Natl. Acad. Sci. U.S.A.">
        <title>Attenuation control of pyrBI operon expression in Escherichia coli K-12.</title>
        <authorList>
            <person name="Turnbough C.L. Jr."/>
            <person name="Hicks K.L."/>
            <person name="Donahue J.P."/>
        </authorList>
    </citation>
    <scope>NUCLEOTIDE SEQUENCE [GENOMIC DNA]</scope>
    <source>
        <strain>K12</strain>
    </source>
</reference>
<reference key="3">
    <citation type="journal article" date="1990" name="J. Biol. Chem.">
        <title>Characterization of transcriptional initiation from promoters P1 and P2 of the pyrBI operon of Escherichia coli K12.</title>
        <authorList>
            <person name="Donahue J.P."/>
            <person name="Turnbough C.L. Jr."/>
        </authorList>
    </citation>
    <scope>NUCLEOTIDE SEQUENCE [GENOMIC DNA]</scope>
    <source>
        <strain>K12</strain>
    </source>
</reference>
<reference key="4">
    <citation type="journal article" date="1995" name="Nucleic Acids Res.">
        <title>Analysis of the Escherichia coli genome VI: DNA sequence of the region from 92.8 through 100 minutes.</title>
        <authorList>
            <person name="Burland V.D."/>
            <person name="Plunkett G. III"/>
            <person name="Sofia H.J."/>
            <person name="Daniels D.L."/>
            <person name="Blattner F.R."/>
        </authorList>
    </citation>
    <scope>NUCLEOTIDE SEQUENCE [LARGE SCALE GENOMIC DNA]</scope>
    <source>
        <strain>K12 / MG1655 / ATCC 47076</strain>
    </source>
</reference>
<reference key="5">
    <citation type="journal article" date="1997" name="Science">
        <title>The complete genome sequence of Escherichia coli K-12.</title>
        <authorList>
            <person name="Blattner F.R."/>
            <person name="Plunkett G. III"/>
            <person name="Bloch C.A."/>
            <person name="Perna N.T."/>
            <person name="Burland V."/>
            <person name="Riley M."/>
            <person name="Collado-Vides J."/>
            <person name="Glasner J.D."/>
            <person name="Rode C.K."/>
            <person name="Mayhew G.F."/>
            <person name="Gregor J."/>
            <person name="Davis N.W."/>
            <person name="Kirkpatrick H.A."/>
            <person name="Goeden M.A."/>
            <person name="Rose D.J."/>
            <person name="Mau B."/>
            <person name="Shao Y."/>
        </authorList>
    </citation>
    <scope>NUCLEOTIDE SEQUENCE [LARGE SCALE GENOMIC DNA]</scope>
    <source>
        <strain>K12 / MG1655 / ATCC 47076</strain>
    </source>
</reference>
<reference key="6">
    <citation type="journal article" date="2006" name="Mol. Syst. Biol.">
        <title>Highly accurate genome sequences of Escherichia coli K-12 strains MG1655 and W3110.</title>
        <authorList>
            <person name="Hayashi K."/>
            <person name="Morooka N."/>
            <person name="Yamamoto Y."/>
            <person name="Fujita K."/>
            <person name="Isono K."/>
            <person name="Choi S."/>
            <person name="Ohtsubo E."/>
            <person name="Baba T."/>
            <person name="Wanner B.L."/>
            <person name="Mori H."/>
            <person name="Horiuchi T."/>
        </authorList>
    </citation>
    <scope>NUCLEOTIDE SEQUENCE [LARGE SCALE GENOMIC DNA]</scope>
    <source>
        <strain>K12 / W3110 / ATCC 27325 / DSM 5911</strain>
    </source>
</reference>
<sequence>MVQCVRHFVLPRLKKDAGLPFFFPLITHSQPLNRGAFFCPGVRR</sequence>
<proteinExistence type="predicted"/>
<feature type="chain" id="PRO_0000196521" description="pyr operon leader peptide">
    <location>
        <begin position="1"/>
        <end position="44"/>
    </location>
</feature>
<accession>P0AD83</accession>
<accession>P09150</accession>
<accession>Q2M661</accession>
<keyword id="KW-0428">Leader peptide</keyword>
<keyword id="KW-0665">Pyrimidine biosynthesis</keyword>
<keyword id="KW-1185">Reference proteome</keyword>
<dbReference type="EMBL" id="M10743">
    <property type="protein sequence ID" value="AAA24478.1"/>
    <property type="molecule type" value="Genomic_DNA"/>
</dbReference>
<dbReference type="EMBL" id="M60508">
    <property type="protein sequence ID" value="AAA24480.1"/>
    <property type="molecule type" value="Genomic_DNA"/>
</dbReference>
<dbReference type="EMBL" id="U14003">
    <property type="protein sequence ID" value="AAA97143.1"/>
    <property type="molecule type" value="Genomic_DNA"/>
</dbReference>
<dbReference type="EMBL" id="U00096">
    <property type="protein sequence ID" value="AAC77203.1"/>
    <property type="molecule type" value="Genomic_DNA"/>
</dbReference>
<dbReference type="EMBL" id="AP009048">
    <property type="protein sequence ID" value="BAE78245.1"/>
    <property type="molecule type" value="Genomic_DNA"/>
</dbReference>
<dbReference type="PIR" id="A24926">
    <property type="entry name" value="LPECBI"/>
</dbReference>
<dbReference type="RefSeq" id="NP_418667.1">
    <property type="nucleotide sequence ID" value="NC_000913.3"/>
</dbReference>
<dbReference type="RefSeq" id="WP_001296693.1">
    <property type="nucleotide sequence ID" value="NZ_STEB01000013.1"/>
</dbReference>
<dbReference type="BioGRID" id="4262947">
    <property type="interactions" value="11"/>
</dbReference>
<dbReference type="FunCoup" id="P0AD83">
    <property type="interactions" value="5"/>
</dbReference>
<dbReference type="STRING" id="511145.b4246"/>
<dbReference type="PaxDb" id="511145-b4246"/>
<dbReference type="EnsemblBacteria" id="AAC77203">
    <property type="protein sequence ID" value="AAC77203"/>
    <property type="gene ID" value="b4246"/>
</dbReference>
<dbReference type="GeneID" id="93777578"/>
<dbReference type="GeneID" id="948768"/>
<dbReference type="KEGG" id="ecj:JW4205"/>
<dbReference type="KEGG" id="eco:b4246"/>
<dbReference type="KEGG" id="ecoc:C3026_22915"/>
<dbReference type="PATRIC" id="fig|83333.103.peg.555"/>
<dbReference type="EchoBASE" id="EB1256"/>
<dbReference type="eggNOG" id="ENOG5033C5D">
    <property type="taxonomic scope" value="Bacteria"/>
</dbReference>
<dbReference type="HOGENOM" id="CLU_213745_0_0_6"/>
<dbReference type="InParanoid" id="P0AD83"/>
<dbReference type="OrthoDB" id="6624836at2"/>
<dbReference type="BioCyc" id="EcoCyc:EG11279-MONOMER"/>
<dbReference type="PRO" id="PR:P0AD83"/>
<dbReference type="Proteomes" id="UP000000625">
    <property type="component" value="Chromosome"/>
</dbReference>
<dbReference type="GO" id="GO:0019856">
    <property type="term" value="P:pyrimidine nucleobase biosynthetic process"/>
    <property type="evidence" value="ECO:0000315"/>
    <property type="project" value="EcoCyc"/>
</dbReference>
<dbReference type="GO" id="GO:0006221">
    <property type="term" value="P:pyrimidine nucleotide biosynthetic process"/>
    <property type="evidence" value="ECO:0000315"/>
    <property type="project" value="EcoCyc"/>
</dbReference>
<dbReference type="GO" id="GO:0031555">
    <property type="term" value="P:transcriptional attenuation"/>
    <property type="evidence" value="ECO:0000315"/>
    <property type="project" value="EcoCyc"/>
</dbReference>
<dbReference type="InterPro" id="IPR012602">
    <property type="entry name" value="PyrBI_leader"/>
</dbReference>
<dbReference type="NCBIfam" id="NF007587">
    <property type="entry name" value="PRK10224.1"/>
    <property type="match status" value="1"/>
</dbReference>
<dbReference type="Pfam" id="PF08052">
    <property type="entry name" value="PyrBI_leader"/>
    <property type="match status" value="1"/>
</dbReference>
<dbReference type="PIRSF" id="PIRSF003249">
    <property type="entry name" value="PyrBI_leader"/>
    <property type="match status" value="1"/>
</dbReference>
<organism>
    <name type="scientific">Escherichia coli (strain K12)</name>
    <dbReference type="NCBI Taxonomy" id="83333"/>
    <lineage>
        <taxon>Bacteria</taxon>
        <taxon>Pseudomonadati</taxon>
        <taxon>Pseudomonadota</taxon>
        <taxon>Gammaproteobacteria</taxon>
        <taxon>Enterobacterales</taxon>
        <taxon>Enterobacteriaceae</taxon>
        <taxon>Escherichia</taxon>
    </lineage>
</organism>
<gene>
    <name type="primary">pyrL</name>
    <name type="ordered locus">b4246</name>
    <name type="ordered locus">JW4205</name>
</gene>
<name>LPPY_ECOLI</name>